<dbReference type="EC" id="3.6.5.-" evidence="1"/>
<dbReference type="EMBL" id="CP000238">
    <property type="protein sequence ID" value="ABF14259.1"/>
    <property type="molecule type" value="Genomic_DNA"/>
</dbReference>
<dbReference type="RefSeq" id="WP_011520798.1">
    <property type="nucleotide sequence ID" value="NC_007984.1"/>
</dbReference>
<dbReference type="SMR" id="Q1LSJ9"/>
<dbReference type="STRING" id="374463.BCI_0642"/>
<dbReference type="KEGG" id="bci:BCI_0642"/>
<dbReference type="HOGENOM" id="CLU_011747_2_3_6"/>
<dbReference type="OrthoDB" id="9807318at2"/>
<dbReference type="Proteomes" id="UP000002427">
    <property type="component" value="Chromosome"/>
</dbReference>
<dbReference type="GO" id="GO:0005737">
    <property type="term" value="C:cytoplasm"/>
    <property type="evidence" value="ECO:0007669"/>
    <property type="project" value="UniProtKB-SubCell"/>
</dbReference>
<dbReference type="GO" id="GO:0005525">
    <property type="term" value="F:GTP binding"/>
    <property type="evidence" value="ECO:0007669"/>
    <property type="project" value="UniProtKB-UniRule"/>
</dbReference>
<dbReference type="GO" id="GO:0003924">
    <property type="term" value="F:GTPase activity"/>
    <property type="evidence" value="ECO:0007669"/>
    <property type="project" value="UniProtKB-UniRule"/>
</dbReference>
<dbReference type="GO" id="GO:0000287">
    <property type="term" value="F:magnesium ion binding"/>
    <property type="evidence" value="ECO:0007669"/>
    <property type="project" value="InterPro"/>
</dbReference>
<dbReference type="GO" id="GO:0042254">
    <property type="term" value="P:ribosome biogenesis"/>
    <property type="evidence" value="ECO:0007669"/>
    <property type="project" value="UniProtKB-UniRule"/>
</dbReference>
<dbReference type="CDD" id="cd01898">
    <property type="entry name" value="Obg"/>
    <property type="match status" value="1"/>
</dbReference>
<dbReference type="FunFam" id="2.70.210.12:FF:000001">
    <property type="entry name" value="GTPase Obg"/>
    <property type="match status" value="1"/>
</dbReference>
<dbReference type="Gene3D" id="2.70.210.12">
    <property type="entry name" value="GTP1/OBG domain"/>
    <property type="match status" value="1"/>
</dbReference>
<dbReference type="Gene3D" id="3.40.50.300">
    <property type="entry name" value="P-loop containing nucleotide triphosphate hydrolases"/>
    <property type="match status" value="1"/>
</dbReference>
<dbReference type="HAMAP" id="MF_01454">
    <property type="entry name" value="GTPase_Obg"/>
    <property type="match status" value="1"/>
</dbReference>
<dbReference type="InterPro" id="IPR031167">
    <property type="entry name" value="G_OBG"/>
</dbReference>
<dbReference type="InterPro" id="IPR006073">
    <property type="entry name" value="GTP-bd"/>
</dbReference>
<dbReference type="InterPro" id="IPR014100">
    <property type="entry name" value="GTP-bd_Obg/CgtA"/>
</dbReference>
<dbReference type="InterPro" id="IPR006074">
    <property type="entry name" value="GTP1-OBG_CS"/>
</dbReference>
<dbReference type="InterPro" id="IPR006169">
    <property type="entry name" value="GTP1_OBG_dom"/>
</dbReference>
<dbReference type="InterPro" id="IPR036726">
    <property type="entry name" value="GTP1_OBG_dom_sf"/>
</dbReference>
<dbReference type="InterPro" id="IPR045086">
    <property type="entry name" value="OBG_GTPase"/>
</dbReference>
<dbReference type="InterPro" id="IPR027417">
    <property type="entry name" value="P-loop_NTPase"/>
</dbReference>
<dbReference type="InterPro" id="IPR005225">
    <property type="entry name" value="Small_GTP-bd"/>
</dbReference>
<dbReference type="NCBIfam" id="TIGR02729">
    <property type="entry name" value="Obg_CgtA"/>
    <property type="match status" value="1"/>
</dbReference>
<dbReference type="NCBIfam" id="NF008955">
    <property type="entry name" value="PRK12297.1"/>
    <property type="match status" value="1"/>
</dbReference>
<dbReference type="NCBIfam" id="NF008956">
    <property type="entry name" value="PRK12299.1"/>
    <property type="match status" value="1"/>
</dbReference>
<dbReference type="NCBIfam" id="TIGR00231">
    <property type="entry name" value="small_GTP"/>
    <property type="match status" value="1"/>
</dbReference>
<dbReference type="PANTHER" id="PTHR11702">
    <property type="entry name" value="DEVELOPMENTALLY REGULATED GTP-BINDING PROTEIN-RELATED"/>
    <property type="match status" value="1"/>
</dbReference>
<dbReference type="PANTHER" id="PTHR11702:SF31">
    <property type="entry name" value="MITOCHONDRIAL RIBOSOME-ASSOCIATED GTPASE 2"/>
    <property type="match status" value="1"/>
</dbReference>
<dbReference type="Pfam" id="PF01018">
    <property type="entry name" value="GTP1_OBG"/>
    <property type="match status" value="1"/>
</dbReference>
<dbReference type="Pfam" id="PF01926">
    <property type="entry name" value="MMR_HSR1"/>
    <property type="match status" value="1"/>
</dbReference>
<dbReference type="PIRSF" id="PIRSF002401">
    <property type="entry name" value="GTP_bd_Obg/CgtA"/>
    <property type="match status" value="1"/>
</dbReference>
<dbReference type="PRINTS" id="PR00326">
    <property type="entry name" value="GTP1OBG"/>
</dbReference>
<dbReference type="SUPFAM" id="SSF82051">
    <property type="entry name" value="Obg GTP-binding protein N-terminal domain"/>
    <property type="match status" value="1"/>
</dbReference>
<dbReference type="SUPFAM" id="SSF52540">
    <property type="entry name" value="P-loop containing nucleoside triphosphate hydrolases"/>
    <property type="match status" value="1"/>
</dbReference>
<dbReference type="PROSITE" id="PS51710">
    <property type="entry name" value="G_OBG"/>
    <property type="match status" value="1"/>
</dbReference>
<dbReference type="PROSITE" id="PS00905">
    <property type="entry name" value="GTP1_OBG"/>
    <property type="match status" value="1"/>
</dbReference>
<dbReference type="PROSITE" id="PS51883">
    <property type="entry name" value="OBG"/>
    <property type="match status" value="1"/>
</dbReference>
<protein>
    <recommendedName>
        <fullName evidence="1">GTPase Obg</fullName>
        <ecNumber evidence="1">3.6.5.-</ecNumber>
    </recommendedName>
    <alternativeName>
        <fullName evidence="1">GTP-binding protein Obg</fullName>
    </alternativeName>
</protein>
<accession>Q1LSJ9</accession>
<name>OBG_BAUCH</name>
<comment type="function">
    <text evidence="1">An essential GTPase which binds GTP, GDP and possibly (p)ppGpp with moderate affinity, with high nucleotide exchange rates and a fairly low GTP hydrolysis rate. Plays a role in control of the cell cycle, stress response, ribosome biogenesis and in those bacteria that undergo differentiation, in morphogenesis control.</text>
</comment>
<comment type="cofactor">
    <cofactor evidence="1">
        <name>Mg(2+)</name>
        <dbReference type="ChEBI" id="CHEBI:18420"/>
    </cofactor>
</comment>
<comment type="subunit">
    <text evidence="1">Monomer.</text>
</comment>
<comment type="subcellular location">
    <subcellularLocation>
        <location evidence="1">Cytoplasm</location>
    </subcellularLocation>
</comment>
<comment type="similarity">
    <text evidence="1">Belongs to the TRAFAC class OBG-HflX-like GTPase superfamily. OBG GTPase family.</text>
</comment>
<feature type="chain" id="PRO_0000385739" description="GTPase Obg">
    <location>
        <begin position="1"/>
        <end position="336"/>
    </location>
</feature>
<feature type="domain" description="Obg" evidence="2">
    <location>
        <begin position="1"/>
        <end position="159"/>
    </location>
</feature>
<feature type="domain" description="OBG-type G" evidence="1">
    <location>
        <begin position="160"/>
        <end position="333"/>
    </location>
</feature>
<feature type="binding site" evidence="1">
    <location>
        <begin position="166"/>
        <end position="173"/>
    </location>
    <ligand>
        <name>GTP</name>
        <dbReference type="ChEBI" id="CHEBI:37565"/>
    </ligand>
</feature>
<feature type="binding site" evidence="1">
    <location>
        <position position="173"/>
    </location>
    <ligand>
        <name>Mg(2+)</name>
        <dbReference type="ChEBI" id="CHEBI:18420"/>
    </ligand>
</feature>
<feature type="binding site" evidence="1">
    <location>
        <begin position="191"/>
        <end position="195"/>
    </location>
    <ligand>
        <name>GTP</name>
        <dbReference type="ChEBI" id="CHEBI:37565"/>
    </ligand>
</feature>
<feature type="binding site" evidence="1">
    <location>
        <position position="193"/>
    </location>
    <ligand>
        <name>Mg(2+)</name>
        <dbReference type="ChEBI" id="CHEBI:18420"/>
    </ligand>
</feature>
<feature type="binding site" evidence="1">
    <location>
        <begin position="213"/>
        <end position="216"/>
    </location>
    <ligand>
        <name>GTP</name>
        <dbReference type="ChEBI" id="CHEBI:37565"/>
    </ligand>
</feature>
<feature type="binding site" evidence="1">
    <location>
        <begin position="283"/>
        <end position="286"/>
    </location>
    <ligand>
        <name>GTP</name>
        <dbReference type="ChEBI" id="CHEBI:37565"/>
    </ligand>
</feature>
<feature type="binding site" evidence="1">
    <location>
        <begin position="314"/>
        <end position="316"/>
    </location>
    <ligand>
        <name>GTP</name>
        <dbReference type="ChEBI" id="CHEBI:37565"/>
    </ligand>
</feature>
<reference key="1">
    <citation type="journal article" date="2006" name="PLoS Biol.">
        <title>Metabolic complementarity and genomics of the dual bacterial symbiosis of sharpshooters.</title>
        <authorList>
            <person name="Wu D."/>
            <person name="Daugherty S.C."/>
            <person name="Van Aken S.E."/>
            <person name="Pai G.H."/>
            <person name="Watkins K.L."/>
            <person name="Khouri H."/>
            <person name="Tallon L.J."/>
            <person name="Zaborsky J.M."/>
            <person name="Dunbar H.E."/>
            <person name="Tran P.L."/>
            <person name="Moran N.A."/>
            <person name="Eisen J.A."/>
        </authorList>
    </citation>
    <scope>NUCLEOTIDE SEQUENCE [LARGE SCALE GENOMIC DNA]</scope>
</reference>
<gene>
    <name evidence="1" type="primary">obg</name>
    <name type="ordered locus">BCI_0642</name>
</gene>
<evidence type="ECO:0000255" key="1">
    <source>
        <dbReference type="HAMAP-Rule" id="MF_01454"/>
    </source>
</evidence>
<evidence type="ECO:0000255" key="2">
    <source>
        <dbReference type="PROSITE-ProRule" id="PRU01231"/>
    </source>
</evidence>
<keyword id="KW-0963">Cytoplasm</keyword>
<keyword id="KW-0342">GTP-binding</keyword>
<keyword id="KW-0378">Hydrolase</keyword>
<keyword id="KW-0460">Magnesium</keyword>
<keyword id="KW-0479">Metal-binding</keyword>
<keyword id="KW-0547">Nucleotide-binding</keyword>
<keyword id="KW-1185">Reference proteome</keyword>
<sequence length="336" mass="36784">MKFIDEATIIVAAGDGGNGCISFRREKYIPFGPAEGGDGGNGGNVWLQADENLNTLIDYHFQHNFHAENGKHGQGKNFTGKCGKDLTIKVPIGTRVVDQNTNEILGDLIVHQQYLLVAKGGLRGLGNNHFKSSANCTPRKKTNGTKGEIRRLQLELILLADVGLLGLPNVGKSTLIRAVSAAKPKVANYPFTTLVPNLGVVQVHKKQSFIIADIPGLIKGAADGAGLGIRFLKHLERCRILLHLIDLAPADQSSPVENASIIINELKRYSEKLATKPSWLVFNKLDLIDKREALNIAQTISDALNQKHNYYLISAMNHQGIKTLCRDIMLFINKNK</sequence>
<proteinExistence type="inferred from homology"/>
<organism>
    <name type="scientific">Baumannia cicadellinicola subsp. Homalodisca coagulata</name>
    <dbReference type="NCBI Taxonomy" id="374463"/>
    <lineage>
        <taxon>Bacteria</taxon>
        <taxon>Pseudomonadati</taxon>
        <taxon>Pseudomonadota</taxon>
        <taxon>Gammaproteobacteria</taxon>
        <taxon>Candidatus Palibaumannia</taxon>
    </lineage>
</organism>